<reference key="1">
    <citation type="submission" date="2007-05" db="EMBL/GenBank/DDBJ databases">
        <title>Complete sequence of Dehalococcoides sp. BAV1.</title>
        <authorList>
            <consortium name="US DOE Joint Genome Institute"/>
            <person name="Copeland A."/>
            <person name="Lucas S."/>
            <person name="Lapidus A."/>
            <person name="Barry K."/>
            <person name="Detter J.C."/>
            <person name="Glavina del Rio T."/>
            <person name="Hammon N."/>
            <person name="Israni S."/>
            <person name="Pitluck S."/>
            <person name="Lowry S."/>
            <person name="Clum A."/>
            <person name="Schmutz J."/>
            <person name="Larimer F."/>
            <person name="Land M."/>
            <person name="Hauser L."/>
            <person name="Kyrpides N."/>
            <person name="Kim E."/>
            <person name="Ritalahti K.M."/>
            <person name="Loeffler F."/>
            <person name="Richardson P."/>
        </authorList>
    </citation>
    <scope>NUCLEOTIDE SEQUENCE [LARGE SCALE GENOMIC DNA]</scope>
    <source>
        <strain>ATCC BAA-2100 / JCM 16839 / KCTC 5957 / BAV1</strain>
    </source>
</reference>
<comment type="function">
    <text evidence="1">Catalyzes the reversible oxidation of malate to oxaloacetate.</text>
</comment>
<comment type="catalytic activity">
    <reaction evidence="1">
        <text>(S)-malate + NAD(+) = oxaloacetate + NADH + H(+)</text>
        <dbReference type="Rhea" id="RHEA:21432"/>
        <dbReference type="ChEBI" id="CHEBI:15378"/>
        <dbReference type="ChEBI" id="CHEBI:15589"/>
        <dbReference type="ChEBI" id="CHEBI:16452"/>
        <dbReference type="ChEBI" id="CHEBI:57540"/>
        <dbReference type="ChEBI" id="CHEBI:57945"/>
        <dbReference type="EC" id="1.1.1.37"/>
    </reaction>
</comment>
<comment type="similarity">
    <text evidence="1">Belongs to the LDH/MDH superfamily. MDH type 3 family.</text>
</comment>
<keyword id="KW-0520">NAD</keyword>
<keyword id="KW-0560">Oxidoreductase</keyword>
<keyword id="KW-0816">Tricarboxylic acid cycle</keyword>
<feature type="chain" id="PRO_1000081358" description="Malate dehydrogenase">
    <location>
        <begin position="1"/>
        <end position="307"/>
    </location>
</feature>
<feature type="active site" description="Proton acceptor" evidence="1">
    <location>
        <position position="174"/>
    </location>
</feature>
<feature type="binding site" evidence="1">
    <location>
        <begin position="8"/>
        <end position="13"/>
    </location>
    <ligand>
        <name>NAD(+)</name>
        <dbReference type="ChEBI" id="CHEBI:57540"/>
    </ligand>
</feature>
<feature type="binding site" evidence="1">
    <location>
        <position position="32"/>
    </location>
    <ligand>
        <name>NAD(+)</name>
        <dbReference type="ChEBI" id="CHEBI:57540"/>
    </ligand>
</feature>
<feature type="binding site" evidence="1">
    <location>
        <position position="81"/>
    </location>
    <ligand>
        <name>substrate</name>
    </ligand>
</feature>
<feature type="binding site" evidence="1">
    <location>
        <position position="87"/>
    </location>
    <ligand>
        <name>substrate</name>
    </ligand>
</feature>
<feature type="binding site" evidence="1">
    <location>
        <position position="94"/>
    </location>
    <ligand>
        <name>NAD(+)</name>
        <dbReference type="ChEBI" id="CHEBI:57540"/>
    </ligand>
</feature>
<feature type="binding site" evidence="1">
    <location>
        <begin position="117"/>
        <end position="119"/>
    </location>
    <ligand>
        <name>NAD(+)</name>
        <dbReference type="ChEBI" id="CHEBI:57540"/>
    </ligand>
</feature>
<feature type="binding site" evidence="1">
    <location>
        <position position="119"/>
    </location>
    <ligand>
        <name>substrate</name>
    </ligand>
</feature>
<feature type="binding site" evidence="1">
    <location>
        <position position="150"/>
    </location>
    <ligand>
        <name>substrate</name>
    </ligand>
</feature>
<gene>
    <name evidence="1" type="primary">mdh</name>
    <name type="ordered locus">DehaBAV1_0428</name>
</gene>
<name>MDH_DEHMB</name>
<sequence length="307" mass="32004">MPKISVIGAGNVGATLAQRLIEKDFADVVMLDVVEGIPQGKALDISQSASVLGFRHAITGSNDYAETAGSEIVVITAGIARKPGMTREELLAINQKIMTDVVSNCLKYSPEATLVVVSNPVDTMTYLAWKLSGLPRKRVVGLSGVLDGGRLATFVARELGVNPSAVSPCVMGEHGGSMVVMPRFTLVNGKPLSELVSPEKADELAKRAVNGGAEIVAFLKTGSAFYAPSASVAAMVEAIFLGSGKVMNCAAVLDGEYGLRNIVLGVPVKLGKGGIKEIITLPLDGQENARLQVSAEMVKAQIASLSL</sequence>
<accession>A5FS18</accession>
<organism>
    <name type="scientific">Dehalococcoides mccartyi (strain ATCC BAA-2100 / JCM 16839 / KCTC 5957 / BAV1)</name>
    <dbReference type="NCBI Taxonomy" id="216389"/>
    <lineage>
        <taxon>Bacteria</taxon>
        <taxon>Bacillati</taxon>
        <taxon>Chloroflexota</taxon>
        <taxon>Dehalococcoidia</taxon>
        <taxon>Dehalococcoidales</taxon>
        <taxon>Dehalococcoidaceae</taxon>
        <taxon>Dehalococcoides</taxon>
    </lineage>
</organism>
<evidence type="ECO:0000255" key="1">
    <source>
        <dbReference type="HAMAP-Rule" id="MF_00487"/>
    </source>
</evidence>
<dbReference type="EC" id="1.1.1.37" evidence="1"/>
<dbReference type="EMBL" id="CP000688">
    <property type="protein sequence ID" value="ABQ17013.1"/>
    <property type="molecule type" value="Genomic_DNA"/>
</dbReference>
<dbReference type="SMR" id="A5FS18"/>
<dbReference type="KEGG" id="deb:DehaBAV1_0428"/>
<dbReference type="PATRIC" id="fig|216389.18.peg.471"/>
<dbReference type="HOGENOM" id="CLU_045401_2_1_0"/>
<dbReference type="GO" id="GO:0004459">
    <property type="term" value="F:L-lactate dehydrogenase activity"/>
    <property type="evidence" value="ECO:0007669"/>
    <property type="project" value="TreeGrafter"/>
</dbReference>
<dbReference type="GO" id="GO:0030060">
    <property type="term" value="F:L-malate dehydrogenase (NAD+) activity"/>
    <property type="evidence" value="ECO:0007669"/>
    <property type="project" value="UniProtKB-UniRule"/>
</dbReference>
<dbReference type="GO" id="GO:0006089">
    <property type="term" value="P:lactate metabolic process"/>
    <property type="evidence" value="ECO:0007669"/>
    <property type="project" value="TreeGrafter"/>
</dbReference>
<dbReference type="GO" id="GO:0006099">
    <property type="term" value="P:tricarboxylic acid cycle"/>
    <property type="evidence" value="ECO:0007669"/>
    <property type="project" value="UniProtKB-UniRule"/>
</dbReference>
<dbReference type="CDD" id="cd01339">
    <property type="entry name" value="LDH-like_MDH"/>
    <property type="match status" value="1"/>
</dbReference>
<dbReference type="FunFam" id="3.40.50.720:FF:000018">
    <property type="entry name" value="Malate dehydrogenase"/>
    <property type="match status" value="1"/>
</dbReference>
<dbReference type="Gene3D" id="3.90.110.10">
    <property type="entry name" value="Lactate dehydrogenase/glycoside hydrolase, family 4, C-terminal"/>
    <property type="match status" value="1"/>
</dbReference>
<dbReference type="Gene3D" id="3.40.50.720">
    <property type="entry name" value="NAD(P)-binding Rossmann-like Domain"/>
    <property type="match status" value="1"/>
</dbReference>
<dbReference type="HAMAP" id="MF_00487">
    <property type="entry name" value="Malate_dehydrog_3"/>
    <property type="match status" value="1"/>
</dbReference>
<dbReference type="InterPro" id="IPR001557">
    <property type="entry name" value="L-lactate/malate_DH"/>
</dbReference>
<dbReference type="InterPro" id="IPR022383">
    <property type="entry name" value="Lactate/malate_DH_C"/>
</dbReference>
<dbReference type="InterPro" id="IPR001236">
    <property type="entry name" value="Lactate/malate_DH_N"/>
</dbReference>
<dbReference type="InterPro" id="IPR015955">
    <property type="entry name" value="Lactate_DH/Glyco_Ohase_4_C"/>
</dbReference>
<dbReference type="InterPro" id="IPR011275">
    <property type="entry name" value="Malate_DH_type3"/>
</dbReference>
<dbReference type="InterPro" id="IPR036291">
    <property type="entry name" value="NAD(P)-bd_dom_sf"/>
</dbReference>
<dbReference type="NCBIfam" id="TIGR01763">
    <property type="entry name" value="MalateDH_bact"/>
    <property type="match status" value="1"/>
</dbReference>
<dbReference type="NCBIfam" id="NF004863">
    <property type="entry name" value="PRK06223.1"/>
    <property type="match status" value="1"/>
</dbReference>
<dbReference type="PANTHER" id="PTHR43128">
    <property type="entry name" value="L-2-HYDROXYCARBOXYLATE DEHYDROGENASE (NAD(P)(+))"/>
    <property type="match status" value="1"/>
</dbReference>
<dbReference type="PANTHER" id="PTHR43128:SF16">
    <property type="entry name" value="L-LACTATE DEHYDROGENASE"/>
    <property type="match status" value="1"/>
</dbReference>
<dbReference type="Pfam" id="PF02866">
    <property type="entry name" value="Ldh_1_C"/>
    <property type="match status" value="1"/>
</dbReference>
<dbReference type="Pfam" id="PF00056">
    <property type="entry name" value="Ldh_1_N"/>
    <property type="match status" value="1"/>
</dbReference>
<dbReference type="PIRSF" id="PIRSF000102">
    <property type="entry name" value="Lac_mal_DH"/>
    <property type="match status" value="1"/>
</dbReference>
<dbReference type="PRINTS" id="PR00086">
    <property type="entry name" value="LLDHDRGNASE"/>
</dbReference>
<dbReference type="SUPFAM" id="SSF56327">
    <property type="entry name" value="LDH C-terminal domain-like"/>
    <property type="match status" value="1"/>
</dbReference>
<dbReference type="SUPFAM" id="SSF51735">
    <property type="entry name" value="NAD(P)-binding Rossmann-fold domains"/>
    <property type="match status" value="1"/>
</dbReference>
<proteinExistence type="inferred from homology"/>
<protein>
    <recommendedName>
        <fullName evidence="1">Malate dehydrogenase</fullName>
        <ecNumber evidence="1">1.1.1.37</ecNumber>
    </recommendedName>
</protein>